<proteinExistence type="inferred from homology"/>
<dbReference type="EMBL" id="AE002098">
    <property type="protein sequence ID" value="AAF41135.1"/>
    <property type="molecule type" value="Genomic_DNA"/>
</dbReference>
<dbReference type="PIR" id="E81165">
    <property type="entry name" value="E81165"/>
</dbReference>
<dbReference type="RefSeq" id="NP_273764.1">
    <property type="nucleotide sequence ID" value="NC_003112.2"/>
</dbReference>
<dbReference type="RefSeq" id="WP_002232040.1">
    <property type="nucleotide sequence ID" value="NC_003112.2"/>
</dbReference>
<dbReference type="SMR" id="P66274"/>
<dbReference type="FunCoup" id="P66274">
    <property type="interactions" value="366"/>
</dbReference>
<dbReference type="STRING" id="122586.NMB0722"/>
<dbReference type="PaxDb" id="122586-NMB0722"/>
<dbReference type="GeneID" id="93386452"/>
<dbReference type="KEGG" id="nme:NMB0722"/>
<dbReference type="PATRIC" id="fig|122586.8.peg.920"/>
<dbReference type="HOGENOM" id="CLU_169643_1_0_4"/>
<dbReference type="InParanoid" id="P66274"/>
<dbReference type="OrthoDB" id="47476at2"/>
<dbReference type="PRO" id="PR:P66274"/>
<dbReference type="Proteomes" id="UP000000425">
    <property type="component" value="Chromosome"/>
</dbReference>
<dbReference type="GO" id="GO:0022625">
    <property type="term" value="C:cytosolic large ribosomal subunit"/>
    <property type="evidence" value="ECO:0000318"/>
    <property type="project" value="GO_Central"/>
</dbReference>
<dbReference type="GO" id="GO:0003735">
    <property type="term" value="F:structural constituent of ribosome"/>
    <property type="evidence" value="ECO:0000318"/>
    <property type="project" value="GO_Central"/>
</dbReference>
<dbReference type="GO" id="GO:0006412">
    <property type="term" value="P:translation"/>
    <property type="evidence" value="ECO:0007669"/>
    <property type="project" value="UniProtKB-UniRule"/>
</dbReference>
<dbReference type="FunFam" id="4.10.410.60:FF:000001">
    <property type="entry name" value="50S ribosomal protein L35"/>
    <property type="match status" value="1"/>
</dbReference>
<dbReference type="Gene3D" id="4.10.410.60">
    <property type="match status" value="1"/>
</dbReference>
<dbReference type="HAMAP" id="MF_00514">
    <property type="entry name" value="Ribosomal_bL35"/>
    <property type="match status" value="1"/>
</dbReference>
<dbReference type="InterPro" id="IPR001706">
    <property type="entry name" value="Ribosomal_bL35"/>
</dbReference>
<dbReference type="InterPro" id="IPR021137">
    <property type="entry name" value="Ribosomal_bL35-like"/>
</dbReference>
<dbReference type="InterPro" id="IPR018265">
    <property type="entry name" value="Ribosomal_bL35_CS"/>
</dbReference>
<dbReference type="InterPro" id="IPR037229">
    <property type="entry name" value="Ribosomal_bL35_sf"/>
</dbReference>
<dbReference type="NCBIfam" id="TIGR00001">
    <property type="entry name" value="rpmI_bact"/>
    <property type="match status" value="1"/>
</dbReference>
<dbReference type="PANTHER" id="PTHR33343">
    <property type="entry name" value="54S RIBOSOMAL PROTEIN BL35M"/>
    <property type="match status" value="1"/>
</dbReference>
<dbReference type="PANTHER" id="PTHR33343:SF1">
    <property type="entry name" value="LARGE RIBOSOMAL SUBUNIT PROTEIN BL35M"/>
    <property type="match status" value="1"/>
</dbReference>
<dbReference type="Pfam" id="PF01632">
    <property type="entry name" value="Ribosomal_L35p"/>
    <property type="match status" value="1"/>
</dbReference>
<dbReference type="PRINTS" id="PR00064">
    <property type="entry name" value="RIBOSOMALL35"/>
</dbReference>
<dbReference type="SUPFAM" id="SSF143034">
    <property type="entry name" value="L35p-like"/>
    <property type="match status" value="1"/>
</dbReference>
<dbReference type="PROSITE" id="PS00936">
    <property type="entry name" value="RIBOSOMAL_L35"/>
    <property type="match status" value="1"/>
</dbReference>
<sequence length="65" mass="7357">MPKMKTKSSAKKRFKVLGNGGVKRAHAFKRHILTKKTTKNKRQLRGTSMVNDRDLASVAKMLPYA</sequence>
<organism>
    <name type="scientific">Neisseria meningitidis serogroup B (strain ATCC BAA-335 / MC58)</name>
    <dbReference type="NCBI Taxonomy" id="122586"/>
    <lineage>
        <taxon>Bacteria</taxon>
        <taxon>Pseudomonadati</taxon>
        <taxon>Pseudomonadota</taxon>
        <taxon>Betaproteobacteria</taxon>
        <taxon>Neisseriales</taxon>
        <taxon>Neisseriaceae</taxon>
        <taxon>Neisseria</taxon>
    </lineage>
</organism>
<feature type="chain" id="PRO_0000177390" description="Large ribosomal subunit protein bL35">
    <location>
        <begin position="1"/>
        <end position="65"/>
    </location>
</feature>
<keyword id="KW-1185">Reference proteome</keyword>
<keyword id="KW-0687">Ribonucleoprotein</keyword>
<keyword id="KW-0689">Ribosomal protein</keyword>
<evidence type="ECO:0000255" key="1">
    <source>
        <dbReference type="HAMAP-Rule" id="MF_00514"/>
    </source>
</evidence>
<evidence type="ECO:0000305" key="2"/>
<gene>
    <name evidence="1" type="primary">rpmI</name>
    <name type="ordered locus">NMB0722</name>
</gene>
<accession>P66274</accession>
<accession>Q9JQN7</accession>
<name>RL35_NEIMB</name>
<protein>
    <recommendedName>
        <fullName evidence="1">Large ribosomal subunit protein bL35</fullName>
    </recommendedName>
    <alternativeName>
        <fullName evidence="2">50S ribosomal protein L35</fullName>
    </alternativeName>
</protein>
<comment type="similarity">
    <text evidence="1">Belongs to the bacterial ribosomal protein bL35 family.</text>
</comment>
<reference key="1">
    <citation type="journal article" date="2000" name="Science">
        <title>Complete genome sequence of Neisseria meningitidis serogroup B strain MC58.</title>
        <authorList>
            <person name="Tettelin H."/>
            <person name="Saunders N.J."/>
            <person name="Heidelberg J.F."/>
            <person name="Jeffries A.C."/>
            <person name="Nelson K.E."/>
            <person name="Eisen J.A."/>
            <person name="Ketchum K.A."/>
            <person name="Hood D.W."/>
            <person name="Peden J.F."/>
            <person name="Dodson R.J."/>
            <person name="Nelson W.C."/>
            <person name="Gwinn M.L."/>
            <person name="DeBoy R.T."/>
            <person name="Peterson J.D."/>
            <person name="Hickey E.K."/>
            <person name="Haft D.H."/>
            <person name="Salzberg S.L."/>
            <person name="White O."/>
            <person name="Fleischmann R.D."/>
            <person name="Dougherty B.A."/>
            <person name="Mason T.M."/>
            <person name="Ciecko A."/>
            <person name="Parksey D.S."/>
            <person name="Blair E."/>
            <person name="Cittone H."/>
            <person name="Clark E.B."/>
            <person name="Cotton M.D."/>
            <person name="Utterback T.R."/>
            <person name="Khouri H.M."/>
            <person name="Qin H."/>
            <person name="Vamathevan J.J."/>
            <person name="Gill J."/>
            <person name="Scarlato V."/>
            <person name="Masignani V."/>
            <person name="Pizza M."/>
            <person name="Grandi G."/>
            <person name="Sun L."/>
            <person name="Smith H.O."/>
            <person name="Fraser C.M."/>
            <person name="Moxon E.R."/>
            <person name="Rappuoli R."/>
            <person name="Venter J.C."/>
        </authorList>
    </citation>
    <scope>NUCLEOTIDE SEQUENCE [LARGE SCALE GENOMIC DNA]</scope>
    <source>
        <strain>ATCC BAA-335 / MC58</strain>
    </source>
</reference>